<evidence type="ECO:0000250" key="1"/>
<evidence type="ECO:0000305" key="2"/>
<name>CP2DR_MESAU</name>
<protein>
    <recommendedName>
        <fullName>Cytochrome P450 2D27</fullName>
        <ecNumber>1.14.14.-</ecNumber>
    </recommendedName>
    <alternativeName>
        <fullName>CYPIID27</fullName>
    </alternativeName>
</protein>
<gene>
    <name type="primary">CYP2D27</name>
</gene>
<keyword id="KW-0256">Endoplasmic reticulum</keyword>
<keyword id="KW-0349">Heme</keyword>
<keyword id="KW-0408">Iron</keyword>
<keyword id="KW-0472">Membrane</keyword>
<keyword id="KW-0479">Metal-binding</keyword>
<keyword id="KW-0492">Microsome</keyword>
<keyword id="KW-0503">Monooxygenase</keyword>
<keyword id="KW-0560">Oxidoreductase</keyword>
<keyword id="KW-1185">Reference proteome</keyword>
<proteinExistence type="evidence at protein level"/>
<feature type="chain" id="PRO_0000051748" description="Cytochrome P450 2D27">
    <location>
        <begin position="1"/>
        <end position="500"/>
    </location>
</feature>
<feature type="binding site" description="axial binding residue" evidence="1">
    <location>
        <position position="446"/>
    </location>
    <ligand>
        <name>heme</name>
        <dbReference type="ChEBI" id="CHEBI:30413"/>
    </ligand>
    <ligandPart>
        <name>Fe</name>
        <dbReference type="ChEBI" id="CHEBI:18248"/>
    </ligandPart>
</feature>
<organism>
    <name type="scientific">Mesocricetus auratus</name>
    <name type="common">Golden hamster</name>
    <dbReference type="NCBI Taxonomy" id="10036"/>
    <lineage>
        <taxon>Eukaryota</taxon>
        <taxon>Metazoa</taxon>
        <taxon>Chordata</taxon>
        <taxon>Craniata</taxon>
        <taxon>Vertebrata</taxon>
        <taxon>Euteleostomi</taxon>
        <taxon>Mammalia</taxon>
        <taxon>Eutheria</taxon>
        <taxon>Euarchontoglires</taxon>
        <taxon>Glires</taxon>
        <taxon>Rodentia</taxon>
        <taxon>Myomorpha</taxon>
        <taxon>Muroidea</taxon>
        <taxon>Cricetidae</taxon>
        <taxon>Cricetinae</taxon>
        <taxon>Mesocricetus</taxon>
    </lineage>
</organism>
<sequence>MALLIGDGLWSGVIFTALFLLLVDLMHRRKFWRARYPPGPMPLPGLGNLLQVDFEHMPYSLYKFRQRYGDVFSLQMAWKPVVVINGLKAVREVLVNCGEDTADRPPVPIFNHVGFGHNSQGVAFARYGPQWREQRRFCVSTMRDFGVGKKSLEQWVTEEAGHLCDAFTQEAGHPFNPTTLLNKSVCNVISSLIYAHRFDYEDPFFNSLLKMLQESFGEDTGFIAEVLNAVPVLLRIPGLPGKAFPKLTAFMDSLYKMLIEHKTTWDPAQPPRGLTDAFLAEVEKAKGRPESSFNDENLRMVVADMFIAGMVTTSTTLSWALLLMILHPDVQSRVQQEIDDVIGQVRRPEMADQARMPYTNAVIHEVQRFGDIAPVNIPHMTSHDVEVQGFLIPKGTTLIPNLSSVLKDETVWEKPLHFHPEHFLDAQGRFVKHEAFMPFSAGRRACLGEPLARMELFLFFTCLLQRFSFSVPAGQPRPSDQGIFALPVTPTPYELCAVVR</sequence>
<reference key="1">
    <citation type="journal article" date="2000" name="Comp. Biochem. Physiol.">
        <title>Molecular cloning and characterization of three novel cytochrome P450 2D isoforms, CYP2D20, CYP2D27, and CYP2D28 in the Syrian hamster (Mesocricetus auratus).</title>
        <authorList>
            <person name="Oka T."/>
            <person name="Fukuhara M."/>
            <person name="Ushio F."/>
            <person name="Kurose K."/>
        </authorList>
    </citation>
    <scope>NUCLEOTIDE SEQUENCE [MRNA]</scope>
    <scope>CHARACTERIZATION</scope>
</reference>
<comment type="function">
    <text>Has bufuralol 1'-hydroxylase and debrisoquine 4-hydroxylase activities.</text>
</comment>
<comment type="cofactor">
    <cofactor evidence="1">
        <name>heme</name>
        <dbReference type="ChEBI" id="CHEBI:30413"/>
    </cofactor>
</comment>
<comment type="subcellular location">
    <subcellularLocation>
        <location evidence="1">Endoplasmic reticulum membrane</location>
        <topology evidence="1">Peripheral membrane protein</topology>
    </subcellularLocation>
    <subcellularLocation>
        <location evidence="1">Microsome membrane</location>
        <topology evidence="1">Peripheral membrane protein</topology>
    </subcellularLocation>
</comment>
<comment type="tissue specificity">
    <text>Expressed in liver, but not in kidney, small intestine, and brain.</text>
</comment>
<comment type="similarity">
    <text evidence="2">Belongs to the cytochrome P450 family.</text>
</comment>
<accession>Q9QYG6</accession>
<dbReference type="EC" id="1.14.14.-"/>
<dbReference type="EMBL" id="AB031863">
    <property type="protein sequence ID" value="BAA89312.1"/>
    <property type="molecule type" value="mRNA"/>
</dbReference>
<dbReference type="SMR" id="Q9QYG6"/>
<dbReference type="Proteomes" id="UP000189706">
    <property type="component" value="Unplaced"/>
</dbReference>
<dbReference type="GO" id="GO:0005789">
    <property type="term" value="C:endoplasmic reticulum membrane"/>
    <property type="evidence" value="ECO:0007669"/>
    <property type="project" value="UniProtKB-SubCell"/>
</dbReference>
<dbReference type="GO" id="GO:0020037">
    <property type="term" value="F:heme binding"/>
    <property type="evidence" value="ECO:0007669"/>
    <property type="project" value="InterPro"/>
</dbReference>
<dbReference type="GO" id="GO:0005506">
    <property type="term" value="F:iron ion binding"/>
    <property type="evidence" value="ECO:0007669"/>
    <property type="project" value="InterPro"/>
</dbReference>
<dbReference type="GO" id="GO:0016712">
    <property type="term" value="F:oxidoreductase activity, acting on paired donors, with incorporation or reduction of molecular oxygen, reduced flavin or flavoprotein as one donor, and incorporation of one atom of oxygen"/>
    <property type="evidence" value="ECO:0007669"/>
    <property type="project" value="InterPro"/>
</dbReference>
<dbReference type="GO" id="GO:0019369">
    <property type="term" value="P:arachidonate metabolic process"/>
    <property type="evidence" value="ECO:0007669"/>
    <property type="project" value="TreeGrafter"/>
</dbReference>
<dbReference type="GO" id="GO:0006805">
    <property type="term" value="P:xenobiotic metabolic process"/>
    <property type="evidence" value="ECO:0007669"/>
    <property type="project" value="TreeGrafter"/>
</dbReference>
<dbReference type="CDD" id="cd20663">
    <property type="entry name" value="CYP2D"/>
    <property type="match status" value="1"/>
</dbReference>
<dbReference type="FunFam" id="1.10.630.10:FF:000004">
    <property type="entry name" value="cytochrome P450 2D15 isoform X1"/>
    <property type="match status" value="1"/>
</dbReference>
<dbReference type="Gene3D" id="1.10.630.10">
    <property type="entry name" value="Cytochrome P450"/>
    <property type="match status" value="1"/>
</dbReference>
<dbReference type="InterPro" id="IPR001128">
    <property type="entry name" value="Cyt_P450"/>
</dbReference>
<dbReference type="InterPro" id="IPR017972">
    <property type="entry name" value="Cyt_P450_CS"/>
</dbReference>
<dbReference type="InterPro" id="IPR002401">
    <property type="entry name" value="Cyt_P450_E_grp-I"/>
</dbReference>
<dbReference type="InterPro" id="IPR008069">
    <property type="entry name" value="Cyt_P450_E_grp-I_CYP2D-like"/>
</dbReference>
<dbReference type="InterPro" id="IPR036396">
    <property type="entry name" value="Cyt_P450_sf"/>
</dbReference>
<dbReference type="InterPro" id="IPR050182">
    <property type="entry name" value="Cytochrome_P450_fam2"/>
</dbReference>
<dbReference type="PANTHER" id="PTHR24300:SF109">
    <property type="entry name" value="CYTOCHROME P450 2D26"/>
    <property type="match status" value="1"/>
</dbReference>
<dbReference type="PANTHER" id="PTHR24300">
    <property type="entry name" value="CYTOCHROME P450 508A4-RELATED"/>
    <property type="match status" value="1"/>
</dbReference>
<dbReference type="Pfam" id="PF00067">
    <property type="entry name" value="p450"/>
    <property type="match status" value="1"/>
</dbReference>
<dbReference type="PRINTS" id="PR00463">
    <property type="entry name" value="EP450I"/>
</dbReference>
<dbReference type="PRINTS" id="PR01686">
    <property type="entry name" value="EP450ICYP2D"/>
</dbReference>
<dbReference type="PRINTS" id="PR00385">
    <property type="entry name" value="P450"/>
</dbReference>
<dbReference type="SUPFAM" id="SSF48264">
    <property type="entry name" value="Cytochrome P450"/>
    <property type="match status" value="1"/>
</dbReference>
<dbReference type="PROSITE" id="PS00086">
    <property type="entry name" value="CYTOCHROME_P450"/>
    <property type="match status" value="1"/>
</dbReference>